<keyword id="KW-0456">Lyase</keyword>
<dbReference type="EC" id="4.2.1.108" evidence="1"/>
<dbReference type="EMBL" id="CP000511">
    <property type="protein sequence ID" value="ABM16043.1"/>
    <property type="molecule type" value="Genomic_DNA"/>
</dbReference>
<dbReference type="RefSeq" id="WP_011782413.1">
    <property type="nucleotide sequence ID" value="NC_008726.1"/>
</dbReference>
<dbReference type="SMR" id="A1TFU3"/>
<dbReference type="STRING" id="350058.Mvan_5272"/>
<dbReference type="KEGG" id="mva:Mvan_5272"/>
<dbReference type="eggNOG" id="COG1917">
    <property type="taxonomic scope" value="Bacteria"/>
</dbReference>
<dbReference type="HOGENOM" id="CLU_154525_0_0_11"/>
<dbReference type="UniPathway" id="UPA00067">
    <property type="reaction ID" value="UER00123"/>
</dbReference>
<dbReference type="Proteomes" id="UP000009159">
    <property type="component" value="Chromosome"/>
</dbReference>
<dbReference type="GO" id="GO:0033990">
    <property type="term" value="F:ectoine synthase activity"/>
    <property type="evidence" value="ECO:0007669"/>
    <property type="project" value="UniProtKB-EC"/>
</dbReference>
<dbReference type="GO" id="GO:0019491">
    <property type="term" value="P:ectoine biosynthetic process"/>
    <property type="evidence" value="ECO:0007669"/>
    <property type="project" value="UniProtKB-UniRule"/>
</dbReference>
<dbReference type="CDD" id="cd06978">
    <property type="entry name" value="cupin_EctC"/>
    <property type="match status" value="1"/>
</dbReference>
<dbReference type="Gene3D" id="2.60.120.10">
    <property type="entry name" value="Jelly Rolls"/>
    <property type="match status" value="1"/>
</dbReference>
<dbReference type="HAMAP" id="MF_01255">
    <property type="entry name" value="Ectoine_synth"/>
    <property type="match status" value="1"/>
</dbReference>
<dbReference type="InterPro" id="IPR010462">
    <property type="entry name" value="Ectoine_synth"/>
</dbReference>
<dbReference type="InterPro" id="IPR014710">
    <property type="entry name" value="RmlC-like_jellyroll"/>
</dbReference>
<dbReference type="InterPro" id="IPR011051">
    <property type="entry name" value="RmlC_Cupin_sf"/>
</dbReference>
<dbReference type="NCBIfam" id="NF009806">
    <property type="entry name" value="PRK13290.1"/>
    <property type="match status" value="1"/>
</dbReference>
<dbReference type="PANTHER" id="PTHR39289">
    <property type="match status" value="1"/>
</dbReference>
<dbReference type="PANTHER" id="PTHR39289:SF1">
    <property type="entry name" value="L-ECTOINE SYNTHASE"/>
    <property type="match status" value="1"/>
</dbReference>
<dbReference type="Pfam" id="PF06339">
    <property type="entry name" value="Ectoine_synth"/>
    <property type="match status" value="1"/>
</dbReference>
<dbReference type="SUPFAM" id="SSF51182">
    <property type="entry name" value="RmlC-like cupins"/>
    <property type="match status" value="1"/>
</dbReference>
<accession>A1TFU3</accession>
<proteinExistence type="inferred from homology"/>
<organism>
    <name type="scientific">Mycolicibacterium vanbaalenii (strain DSM 7251 / JCM 13017 / BCRC 16820 / KCTC 9966 / NRRL B-24157 / PYR-1)</name>
    <name type="common">Mycobacterium vanbaalenii</name>
    <dbReference type="NCBI Taxonomy" id="350058"/>
    <lineage>
        <taxon>Bacteria</taxon>
        <taxon>Bacillati</taxon>
        <taxon>Actinomycetota</taxon>
        <taxon>Actinomycetes</taxon>
        <taxon>Mycobacteriales</taxon>
        <taxon>Mycobacteriaceae</taxon>
        <taxon>Mycolicibacterium</taxon>
    </lineage>
</organism>
<feature type="chain" id="PRO_1000067234" description="L-ectoine synthase">
    <location>
        <begin position="1"/>
        <end position="130"/>
    </location>
</feature>
<name>ECTC_MYCVP</name>
<sequence>MIVRTTDEITGTNRDVAAEHWRSKRIILADDGVGFSFHETTIDANSVSEFHYQHHVEAVWVVEGTGTLTNHETGEVHPLRPGTMYLLNGHERHRVTCDTTMRMLCVFNPPVTGREIHDENGAYPAAVQAS</sequence>
<reference key="1">
    <citation type="submission" date="2006-12" db="EMBL/GenBank/DDBJ databases">
        <title>Complete sequence of Mycobacterium vanbaalenii PYR-1.</title>
        <authorList>
            <consortium name="US DOE Joint Genome Institute"/>
            <person name="Copeland A."/>
            <person name="Lucas S."/>
            <person name="Lapidus A."/>
            <person name="Barry K."/>
            <person name="Detter J.C."/>
            <person name="Glavina del Rio T."/>
            <person name="Hammon N."/>
            <person name="Israni S."/>
            <person name="Dalin E."/>
            <person name="Tice H."/>
            <person name="Pitluck S."/>
            <person name="Singan V."/>
            <person name="Schmutz J."/>
            <person name="Larimer F."/>
            <person name="Land M."/>
            <person name="Hauser L."/>
            <person name="Kyrpides N."/>
            <person name="Anderson I.J."/>
            <person name="Miller C."/>
            <person name="Richardson P."/>
        </authorList>
    </citation>
    <scope>NUCLEOTIDE SEQUENCE [LARGE SCALE GENOMIC DNA]</scope>
    <source>
        <strain>DSM 7251 / JCM 13017 / BCRC 16820 / KCTC 9966 / NRRL B-24157 / PYR-1</strain>
    </source>
</reference>
<comment type="function">
    <text evidence="1">Catalyzes the circularization of gamma-N-acetyl-alpha,gamma-diaminobutyric acid (ADABA) to ectoine (1,4,5,6-tetrahydro-2-methyl-4-pyrimidine carboxylic acid), which is an excellent osmoprotectant.</text>
</comment>
<comment type="catalytic activity">
    <reaction evidence="1">
        <text>(2S)-4-acetamido-2-aminobutanoate = L-ectoine + H2O</text>
        <dbReference type="Rhea" id="RHEA:17281"/>
        <dbReference type="ChEBI" id="CHEBI:15377"/>
        <dbReference type="ChEBI" id="CHEBI:58515"/>
        <dbReference type="ChEBI" id="CHEBI:58929"/>
        <dbReference type="EC" id="4.2.1.108"/>
    </reaction>
</comment>
<comment type="pathway">
    <text evidence="1">Amine and polyamine biosynthesis; ectoine biosynthesis; L-ectoine from L-aspartate 4-semialdehyde: step 3/3.</text>
</comment>
<comment type="similarity">
    <text evidence="1">Belongs to the ectoine synthase family.</text>
</comment>
<evidence type="ECO:0000255" key="1">
    <source>
        <dbReference type="HAMAP-Rule" id="MF_01255"/>
    </source>
</evidence>
<protein>
    <recommendedName>
        <fullName evidence="1">L-ectoine synthase</fullName>
        <ecNumber evidence="1">4.2.1.108</ecNumber>
    </recommendedName>
    <alternativeName>
        <fullName evidence="1">N-acetyldiaminobutyrate dehydratase</fullName>
    </alternativeName>
</protein>
<gene>
    <name evidence="1" type="primary">ectC</name>
    <name type="ordered locus">Mvan_5272</name>
</gene>